<accession>P20949</accession>
<feature type="signal peptide">
    <location>
        <begin position="1"/>
        <end position="22"/>
    </location>
</feature>
<feature type="chain" id="PRO_0000036455" description="Variant surface glycoprotein YnAT 1.3">
    <location>
        <begin position="23"/>
        <end position="379"/>
    </location>
</feature>
<feature type="propeptide" id="PRO_0000036456" description="Removed in mature form" evidence="2">
    <location>
        <begin position="380"/>
        <end position="413"/>
    </location>
</feature>
<feature type="lipid moiety-binding region" description="GPI-anchor amidated asparagine" evidence="2">
    <location>
        <position position="379"/>
    </location>
</feature>
<feature type="glycosylation site" description="N-linked (GlcNAc...) asparagine" evidence="2">
    <location>
        <position position="91"/>
    </location>
</feature>
<feature type="glycosylation site" description="N-linked (GlcNAc...) asparagine" evidence="2">
    <location>
        <position position="361"/>
    </location>
</feature>
<feature type="glycosylation site" description="N-linked (GlcNAc...) asparagine" evidence="2">
    <location>
        <position position="379"/>
    </location>
</feature>
<reference key="1">
    <citation type="journal article" date="1987" name="Biochemistry">
        <title>Trypanosoma congolense: structure and molecular organization of the surface glycoproteins of two early bloodstream variants.</title>
        <authorList>
            <person name="Strickler J.E."/>
            <person name="Binder D.A."/>
            <person name="L'Italien J.J."/>
            <person name="Shimamoto G.T."/>
            <person name="Wait S.W."/>
            <person name="Dalheim L.J."/>
            <person name="Novotny J."/>
            <person name="Radding J.A."/>
            <person name="Konigsberg W.H."/>
            <person name="Armstrong M.Y.K."/>
            <person name="Richards F.F."/>
            <person name="Lalor T.M."/>
        </authorList>
    </citation>
    <scope>NUCLEOTIDE SEQUENCE [MRNA]</scope>
    <scope>PARTIAL PROTEIN SEQUENCE</scope>
    <source>
        <strain>YnAT 1.3</strain>
    </source>
</reference>
<organism>
    <name type="scientific">Trypanosoma congolense</name>
    <dbReference type="NCBI Taxonomy" id="5692"/>
    <lineage>
        <taxon>Eukaryota</taxon>
        <taxon>Discoba</taxon>
        <taxon>Euglenozoa</taxon>
        <taxon>Kinetoplastea</taxon>
        <taxon>Metakinetoplastina</taxon>
        <taxon>Trypanosomatida</taxon>
        <taxon>Trypanosomatidae</taxon>
        <taxon>Trypanosoma</taxon>
        <taxon>Nannomonas</taxon>
    </lineage>
</organism>
<comment type="function">
    <text>VSG forms a coat on the surface of the parasite. The trypanosome evades the immune response of the host by expressing a series of antigenically distinct VSGs from an estimated 1000 VSG genes.</text>
</comment>
<comment type="subcellular location">
    <subcellularLocation>
        <location>Cell membrane</location>
        <topology>Lipid-anchor</topology>
        <topology>GPI-anchor</topology>
    </subcellularLocation>
    <text evidence="1">A soluble form is released from ruptured cells by the action of a PI-PLC.</text>
</comment>
<proteinExistence type="evidence at protein level"/>
<name>VSY3_TRYCO</name>
<sequence length="413" mass="44324">MLDNSRARSIVHLLILLKAHVITQIIKNTQEFTSLCTFVKVTLKATDGLTSAASKSQTDWALGENPTSRIKKLITELETSSDRIRLGEEPNLTIQLPQGDPKQRLRRKLEVFLARAKYTEELVRQAQGDVGGRCNEAKAELEEAVTGRKGPDLETQATAAAAALHNKARGTACKVAGATTDTNFAGTSLVADLMCLCAAETNSREKHICGFESHASGVWANAGTNSNAGEIWGKILDACKNREIQVEVTPQFLRIAITKFEGLLGAQAHKLTSNGNAGAWLLGYSMNAGSVTCDGQSSTNGICVDYKGSSDARGPIAWLGHIKNAITALENRDKNLQRVRKLQRQAEAILMSAEDALIEANISLGGKDMVPASEVTVPNSSNPTSRQNSVVQEPTTVSAAAITPLILPWTLLI</sequence>
<dbReference type="EMBL" id="M15113">
    <property type="protein sequence ID" value="AAA30300.1"/>
    <property type="molecule type" value="mRNA"/>
</dbReference>
<dbReference type="PIR" id="B27539">
    <property type="entry name" value="B27539"/>
</dbReference>
<dbReference type="SMR" id="P20949"/>
<dbReference type="VEuPathDB" id="TriTrypDB:TcIL3000.A.H_000164400"/>
<dbReference type="VEuPathDB" id="TriTrypDB:TcIL3000_0_58790"/>
<dbReference type="GO" id="GO:0005886">
    <property type="term" value="C:plasma membrane"/>
    <property type="evidence" value="ECO:0007669"/>
    <property type="project" value="UniProtKB-SubCell"/>
</dbReference>
<dbReference type="GO" id="GO:0098552">
    <property type="term" value="C:side of membrane"/>
    <property type="evidence" value="ECO:0007669"/>
    <property type="project" value="UniProtKB-KW"/>
</dbReference>
<dbReference type="InterPro" id="IPR025932">
    <property type="entry name" value="Trypano_VSG_B_N_dom"/>
</dbReference>
<dbReference type="Pfam" id="PF13206">
    <property type="entry name" value="VSG_B"/>
    <property type="match status" value="1"/>
</dbReference>
<evidence type="ECO:0000250" key="1"/>
<evidence type="ECO:0000255" key="2"/>
<protein>
    <recommendedName>
        <fullName>Variant surface glycoprotein YnAT 1.3</fullName>
        <shortName>VSG</shortName>
    </recommendedName>
</protein>
<keyword id="KW-1003">Cell membrane</keyword>
<keyword id="KW-0903">Direct protein sequencing</keyword>
<keyword id="KW-0325">Glycoprotein</keyword>
<keyword id="KW-0336">GPI-anchor</keyword>
<keyword id="KW-0449">Lipoprotein</keyword>
<keyword id="KW-0472">Membrane</keyword>
<keyword id="KW-0732">Signal</keyword>
<keyword id="KW-0821">Trypanosomiasis</keyword>